<evidence type="ECO:0000255" key="1">
    <source>
        <dbReference type="HAMAP-Rule" id="MF_01315"/>
    </source>
</evidence>
<evidence type="ECO:0000256" key="2">
    <source>
        <dbReference type="SAM" id="MobiDB-lite"/>
    </source>
</evidence>
<evidence type="ECO:0000305" key="3"/>
<reference key="1">
    <citation type="journal article" date="2002" name="Proc. Natl. Acad. Sci. U.S.A.">
        <title>The genome sequence of the facultative intracellular pathogen Brucella melitensis.</title>
        <authorList>
            <person name="DelVecchio V.G."/>
            <person name="Kapatral V."/>
            <person name="Redkar R.J."/>
            <person name="Patra G."/>
            <person name="Mujer C."/>
            <person name="Los T."/>
            <person name="Ivanova N."/>
            <person name="Anderson I."/>
            <person name="Bhattacharyya A."/>
            <person name="Lykidis A."/>
            <person name="Reznik G."/>
            <person name="Jablonski L."/>
            <person name="Larsen N."/>
            <person name="D'Souza M."/>
            <person name="Bernal A."/>
            <person name="Mazur M."/>
            <person name="Goltsman E."/>
            <person name="Selkov E."/>
            <person name="Elzer P.H."/>
            <person name="Hagius S."/>
            <person name="O'Callaghan D."/>
            <person name="Letesson J.-J."/>
            <person name="Haselkorn R."/>
            <person name="Kyrpides N.C."/>
            <person name="Overbeek R."/>
        </authorList>
    </citation>
    <scope>NUCLEOTIDE SEQUENCE [LARGE SCALE GENOMIC DNA]</scope>
    <source>
        <strain>ATCC 23456 / CCUG 17765 / NCTC 10094 / 16M</strain>
    </source>
</reference>
<protein>
    <recommendedName>
        <fullName evidence="1">Small ribosomal subunit protein uS13</fullName>
    </recommendedName>
    <alternativeName>
        <fullName evidence="3">30S ribosomal protein S13</fullName>
    </alternativeName>
</protein>
<proteinExistence type="inferred from homology"/>
<sequence>MARIAGVNIPTNKRVNIALQYIHGIGPKFAREIVTKVGIADDRRVNQLSDAEVLQIREAIDADYQVEGDLRREVSMNIKRLMDLGCYRGLRHRRSLPVRGQRTHTNARTRKGPAKAIAGKKK</sequence>
<dbReference type="EMBL" id="AE008917">
    <property type="protein sequence ID" value="AAL51960.1"/>
    <property type="molecule type" value="Genomic_DNA"/>
</dbReference>
<dbReference type="PIR" id="AE3349">
    <property type="entry name" value="AE3349"/>
</dbReference>
<dbReference type="RefSeq" id="WP_002964340.1">
    <property type="nucleotide sequence ID" value="NZ_GG703780.1"/>
</dbReference>
<dbReference type="SMR" id="P66381"/>
<dbReference type="GeneID" id="97533546"/>
<dbReference type="KEGG" id="bme:BMEI0779"/>
<dbReference type="KEGG" id="bmel:DK63_643"/>
<dbReference type="PATRIC" id="fig|224914.52.peg.674"/>
<dbReference type="eggNOG" id="COG0099">
    <property type="taxonomic scope" value="Bacteria"/>
</dbReference>
<dbReference type="PhylomeDB" id="P66381"/>
<dbReference type="Proteomes" id="UP000000419">
    <property type="component" value="Chromosome I"/>
</dbReference>
<dbReference type="GO" id="GO:0005829">
    <property type="term" value="C:cytosol"/>
    <property type="evidence" value="ECO:0007669"/>
    <property type="project" value="TreeGrafter"/>
</dbReference>
<dbReference type="GO" id="GO:0015935">
    <property type="term" value="C:small ribosomal subunit"/>
    <property type="evidence" value="ECO:0007669"/>
    <property type="project" value="TreeGrafter"/>
</dbReference>
<dbReference type="GO" id="GO:0019843">
    <property type="term" value="F:rRNA binding"/>
    <property type="evidence" value="ECO:0007669"/>
    <property type="project" value="UniProtKB-UniRule"/>
</dbReference>
<dbReference type="GO" id="GO:0003735">
    <property type="term" value="F:structural constituent of ribosome"/>
    <property type="evidence" value="ECO:0007669"/>
    <property type="project" value="InterPro"/>
</dbReference>
<dbReference type="GO" id="GO:0000049">
    <property type="term" value="F:tRNA binding"/>
    <property type="evidence" value="ECO:0007669"/>
    <property type="project" value="UniProtKB-UniRule"/>
</dbReference>
<dbReference type="GO" id="GO:0006412">
    <property type="term" value="P:translation"/>
    <property type="evidence" value="ECO:0007669"/>
    <property type="project" value="UniProtKB-UniRule"/>
</dbReference>
<dbReference type="FunFam" id="1.10.8.50:FF:000001">
    <property type="entry name" value="30S ribosomal protein S13"/>
    <property type="match status" value="1"/>
</dbReference>
<dbReference type="FunFam" id="4.10.910.10:FF:000001">
    <property type="entry name" value="30S ribosomal protein S13"/>
    <property type="match status" value="1"/>
</dbReference>
<dbReference type="Gene3D" id="1.10.8.50">
    <property type="match status" value="1"/>
</dbReference>
<dbReference type="Gene3D" id="4.10.910.10">
    <property type="entry name" value="30s ribosomal protein s13, domain 2"/>
    <property type="match status" value="1"/>
</dbReference>
<dbReference type="HAMAP" id="MF_01315">
    <property type="entry name" value="Ribosomal_uS13"/>
    <property type="match status" value="1"/>
</dbReference>
<dbReference type="InterPro" id="IPR027437">
    <property type="entry name" value="Rbsml_uS13_C"/>
</dbReference>
<dbReference type="InterPro" id="IPR001892">
    <property type="entry name" value="Ribosomal_uS13"/>
</dbReference>
<dbReference type="InterPro" id="IPR010979">
    <property type="entry name" value="Ribosomal_uS13-like_H2TH"/>
</dbReference>
<dbReference type="InterPro" id="IPR019980">
    <property type="entry name" value="Ribosomal_uS13_bac-type"/>
</dbReference>
<dbReference type="InterPro" id="IPR018269">
    <property type="entry name" value="Ribosomal_uS13_CS"/>
</dbReference>
<dbReference type="NCBIfam" id="TIGR03631">
    <property type="entry name" value="uS13_bact"/>
    <property type="match status" value="1"/>
</dbReference>
<dbReference type="PANTHER" id="PTHR10871">
    <property type="entry name" value="30S RIBOSOMAL PROTEIN S13/40S RIBOSOMAL PROTEIN S18"/>
    <property type="match status" value="1"/>
</dbReference>
<dbReference type="PANTHER" id="PTHR10871:SF1">
    <property type="entry name" value="SMALL RIBOSOMAL SUBUNIT PROTEIN US13M"/>
    <property type="match status" value="1"/>
</dbReference>
<dbReference type="Pfam" id="PF00416">
    <property type="entry name" value="Ribosomal_S13"/>
    <property type="match status" value="1"/>
</dbReference>
<dbReference type="PIRSF" id="PIRSF002134">
    <property type="entry name" value="Ribosomal_S13"/>
    <property type="match status" value="1"/>
</dbReference>
<dbReference type="SUPFAM" id="SSF46946">
    <property type="entry name" value="S13-like H2TH domain"/>
    <property type="match status" value="1"/>
</dbReference>
<dbReference type="PROSITE" id="PS00646">
    <property type="entry name" value="RIBOSOMAL_S13_1"/>
    <property type="match status" value="1"/>
</dbReference>
<dbReference type="PROSITE" id="PS50159">
    <property type="entry name" value="RIBOSOMAL_S13_2"/>
    <property type="match status" value="1"/>
</dbReference>
<accession>P66381</accession>
<accession>Q8G093</accession>
<accession>Q8YHL8</accession>
<keyword id="KW-0687">Ribonucleoprotein</keyword>
<keyword id="KW-0689">Ribosomal protein</keyword>
<keyword id="KW-0694">RNA-binding</keyword>
<keyword id="KW-0699">rRNA-binding</keyword>
<keyword id="KW-0820">tRNA-binding</keyword>
<feature type="chain" id="PRO_0000132070" description="Small ribosomal subunit protein uS13">
    <location>
        <begin position="1"/>
        <end position="122"/>
    </location>
</feature>
<feature type="region of interest" description="Disordered" evidence="2">
    <location>
        <begin position="97"/>
        <end position="122"/>
    </location>
</feature>
<name>RS13_BRUME</name>
<comment type="function">
    <text evidence="1">Located at the top of the head of the 30S subunit, it contacts several helices of the 16S rRNA. In the 70S ribosome it contacts the 23S rRNA (bridge B1a) and protein L5 of the 50S subunit (bridge B1b), connecting the 2 subunits; these bridges are implicated in subunit movement. Contacts the tRNAs in the A and P-sites.</text>
</comment>
<comment type="subunit">
    <text evidence="1">Part of the 30S ribosomal subunit. Forms a loose heterodimer with protein S19. Forms two bridges to the 50S subunit in the 70S ribosome.</text>
</comment>
<comment type="similarity">
    <text evidence="1">Belongs to the universal ribosomal protein uS13 family.</text>
</comment>
<gene>
    <name evidence="1" type="primary">rpsM</name>
    <name type="ordered locus">BMEI0779</name>
</gene>
<organism>
    <name type="scientific">Brucella melitensis biotype 1 (strain ATCC 23456 / CCUG 17765 / NCTC 10094 / 16M)</name>
    <dbReference type="NCBI Taxonomy" id="224914"/>
    <lineage>
        <taxon>Bacteria</taxon>
        <taxon>Pseudomonadati</taxon>
        <taxon>Pseudomonadota</taxon>
        <taxon>Alphaproteobacteria</taxon>
        <taxon>Hyphomicrobiales</taxon>
        <taxon>Brucellaceae</taxon>
        <taxon>Brucella/Ochrobactrum group</taxon>
        <taxon>Brucella</taxon>
    </lineage>
</organism>